<evidence type="ECO:0000256" key="1">
    <source>
        <dbReference type="SAM" id="MobiDB-lite"/>
    </source>
</evidence>
<evidence type="ECO:0000305" key="2"/>
<keyword id="KW-1185">Reference proteome</keyword>
<organism>
    <name type="scientific">Drosophila willistoni</name>
    <name type="common">Fruit fly</name>
    <dbReference type="NCBI Taxonomy" id="7260"/>
    <lineage>
        <taxon>Eukaryota</taxon>
        <taxon>Metazoa</taxon>
        <taxon>Ecdysozoa</taxon>
        <taxon>Arthropoda</taxon>
        <taxon>Hexapoda</taxon>
        <taxon>Insecta</taxon>
        <taxon>Pterygota</taxon>
        <taxon>Neoptera</taxon>
        <taxon>Endopterygota</taxon>
        <taxon>Diptera</taxon>
        <taxon>Brachycera</taxon>
        <taxon>Muscomorpha</taxon>
        <taxon>Ephydroidea</taxon>
        <taxon>Drosophilidae</taxon>
        <taxon>Drosophila</taxon>
        <taxon>Sophophora</taxon>
    </lineage>
</organism>
<comment type="similarity">
    <text evidence="2">Belongs to the SOSS-C family.</text>
</comment>
<accession>B4MHR1</accession>
<reference key="1">
    <citation type="journal article" date="2007" name="Nature">
        <title>Evolution of genes and genomes on the Drosophila phylogeny.</title>
        <authorList>
            <consortium name="Drosophila 12 genomes consortium"/>
        </authorList>
    </citation>
    <scope>NUCLEOTIDE SEQUENCE [LARGE SCALE GENOMIC DNA]</scope>
    <source>
        <strain>Tucson 14030-0811.24</strain>
    </source>
</reference>
<feature type="chain" id="PRO_0000385328" description="SOSS complex subunit C homolog A">
    <location>
        <begin position="1"/>
        <end position="125"/>
    </location>
</feature>
<feature type="region of interest" description="Disordered" evidence="1">
    <location>
        <begin position="1"/>
        <end position="20"/>
    </location>
</feature>
<feature type="region of interest" description="Disordered" evidence="1">
    <location>
        <begin position="38"/>
        <end position="74"/>
    </location>
</feature>
<feature type="region of interest" description="Disordered" evidence="1">
    <location>
        <begin position="105"/>
        <end position="125"/>
    </location>
</feature>
<feature type="compositionally biased region" description="Polar residues" evidence="1">
    <location>
        <begin position="1"/>
        <end position="16"/>
    </location>
</feature>
<proteinExistence type="inferred from homology"/>
<sequence length="125" mass="13174">MAFPNTSAQQAETNSKSLEEIHTRKQLLAGGIMNLGLSNTNQMPAPQLLGQPSTTTATPDLVSTNSTPPRAAFNPSSSTTLGFFIPQDSYFGNSLIPVLPRLELPATPSTTTPPITPIANANNPK</sequence>
<gene>
    <name type="ORF">GK21300</name>
</gene>
<dbReference type="EMBL" id="CH960412">
    <property type="protein sequence ID" value="EDW71650.1"/>
    <property type="molecule type" value="Genomic_DNA"/>
</dbReference>
<dbReference type="RefSeq" id="XP_002060664.1">
    <property type="nucleotide sequence ID" value="XM_002060628.1"/>
</dbReference>
<dbReference type="SMR" id="B4MHR1"/>
<dbReference type="STRING" id="7260.B4MHR1"/>
<dbReference type="EnsemblMetazoa" id="FBtr0251951">
    <property type="protein sequence ID" value="FBpp0250443"/>
    <property type="gene ID" value="FBgn0223292"/>
</dbReference>
<dbReference type="eggNOG" id="KOG3420">
    <property type="taxonomic scope" value="Eukaryota"/>
</dbReference>
<dbReference type="HOGENOM" id="CLU_145773_0_0_1"/>
<dbReference type="OMA" id="AIHYTST"/>
<dbReference type="OrthoDB" id="419617at2759"/>
<dbReference type="PhylomeDB" id="B4MHR1"/>
<dbReference type="Proteomes" id="UP000007798">
    <property type="component" value="Unassembled WGS sequence"/>
</dbReference>
<dbReference type="GO" id="GO:0005654">
    <property type="term" value="C:nucleoplasm"/>
    <property type="evidence" value="ECO:0007669"/>
    <property type="project" value="TreeGrafter"/>
</dbReference>
<dbReference type="GO" id="GO:0070876">
    <property type="term" value="C:SOSS complex"/>
    <property type="evidence" value="ECO:0007669"/>
    <property type="project" value="InterPro"/>
</dbReference>
<dbReference type="GO" id="GO:0006281">
    <property type="term" value="P:DNA repair"/>
    <property type="evidence" value="ECO:0007669"/>
    <property type="project" value="InterPro"/>
</dbReference>
<dbReference type="InterPro" id="IPR031821">
    <property type="entry name" value="SOSSC"/>
</dbReference>
<dbReference type="PANTHER" id="PTHR31526">
    <property type="entry name" value="SOSS COMPLEX SUBUNIT C"/>
    <property type="match status" value="1"/>
</dbReference>
<dbReference type="PANTHER" id="PTHR31526:SF2">
    <property type="entry name" value="SOSS COMPLEX SUBUNIT C"/>
    <property type="match status" value="1"/>
</dbReference>
<dbReference type="Pfam" id="PF15925">
    <property type="entry name" value="SOSSC"/>
    <property type="match status" value="1"/>
</dbReference>
<protein>
    <recommendedName>
        <fullName>SOSS complex subunit C homolog A</fullName>
    </recommendedName>
</protein>
<name>SOSCA_DROWI</name>